<accession>Q12604</accession>
<gene>
    <name type="primary">URA3</name>
</gene>
<feature type="chain" id="PRO_0000134660" description="Orotidine 5'-phosphate decarboxylase">
    <location>
        <begin position="1"/>
        <end position="284"/>
    </location>
</feature>
<feature type="active site" description="Proton donor" evidence="2">
    <location>
        <position position="98"/>
    </location>
</feature>
<feature type="binding site" evidence="1">
    <location>
        <position position="42"/>
    </location>
    <ligand>
        <name>substrate</name>
    </ligand>
</feature>
<feature type="binding site" evidence="1">
    <location>
        <begin position="64"/>
        <end position="66"/>
    </location>
    <ligand>
        <name>substrate</name>
    </ligand>
</feature>
<feature type="binding site" evidence="1">
    <location>
        <begin position="96"/>
        <end position="105"/>
    </location>
    <ligand>
        <name>substrate</name>
    </ligand>
</feature>
<feature type="binding site" evidence="1">
    <location>
        <position position="237"/>
    </location>
    <ligand>
        <name>substrate</name>
    </ligand>
</feature>
<feature type="binding site" evidence="1">
    <location>
        <position position="255"/>
    </location>
    <ligand>
        <name>substrate</name>
    </ligand>
</feature>
<reference key="1">
    <citation type="submission" date="1996-02" db="EMBL/GenBank/DDBJ databases">
        <authorList>
            <person name="Adamikova L."/>
            <person name="Nosek J."/>
            <person name="Tomaska L."/>
        </authorList>
    </citation>
    <scope>NUCLEOTIDE SEQUENCE [GENOMIC DNA]</scope>
    <source>
        <strain>270</strain>
    </source>
</reference>
<proteinExistence type="inferred from homology"/>
<protein>
    <recommendedName>
        <fullName>Orotidine 5'-phosphate decarboxylase</fullName>
        <ecNumber>4.1.1.23</ecNumber>
    </recommendedName>
    <alternativeName>
        <fullName>OMP decarboxylase</fullName>
        <shortName>OMPDCase</shortName>
        <shortName>OMPdecase</shortName>
    </alternativeName>
    <alternativeName>
        <fullName>Uridine 5'-monophosphate synthase</fullName>
        <shortName>UMP synthase</shortName>
    </alternativeName>
</protein>
<dbReference type="EC" id="4.1.1.23"/>
<dbReference type="EMBL" id="X95886">
    <property type="protein sequence ID" value="CAA65135.1"/>
    <property type="molecule type" value="Genomic_DNA"/>
</dbReference>
<dbReference type="SMR" id="Q12604"/>
<dbReference type="UniPathway" id="UPA00070">
    <property type="reaction ID" value="UER00120"/>
</dbReference>
<dbReference type="GO" id="GO:0005829">
    <property type="term" value="C:cytosol"/>
    <property type="evidence" value="ECO:0007669"/>
    <property type="project" value="TreeGrafter"/>
</dbReference>
<dbReference type="GO" id="GO:0004590">
    <property type="term" value="F:orotidine-5'-phosphate decarboxylase activity"/>
    <property type="evidence" value="ECO:0007669"/>
    <property type="project" value="UniProtKB-EC"/>
</dbReference>
<dbReference type="GO" id="GO:0006207">
    <property type="term" value="P:'de novo' pyrimidine nucleobase biosynthetic process"/>
    <property type="evidence" value="ECO:0007669"/>
    <property type="project" value="InterPro"/>
</dbReference>
<dbReference type="GO" id="GO:0044205">
    <property type="term" value="P:'de novo' UMP biosynthetic process"/>
    <property type="evidence" value="ECO:0007669"/>
    <property type="project" value="UniProtKB-UniPathway"/>
</dbReference>
<dbReference type="CDD" id="cd04725">
    <property type="entry name" value="OMP_decarboxylase_like"/>
    <property type="match status" value="1"/>
</dbReference>
<dbReference type="FunFam" id="3.20.20.70:FF:000114">
    <property type="entry name" value="Decarboxylase,orotidine phosphate"/>
    <property type="match status" value="1"/>
</dbReference>
<dbReference type="Gene3D" id="3.20.20.70">
    <property type="entry name" value="Aldolase class I"/>
    <property type="match status" value="1"/>
</dbReference>
<dbReference type="InterPro" id="IPR013785">
    <property type="entry name" value="Aldolase_TIM"/>
</dbReference>
<dbReference type="InterPro" id="IPR014732">
    <property type="entry name" value="OMPdecase"/>
</dbReference>
<dbReference type="InterPro" id="IPR018089">
    <property type="entry name" value="OMPdecase_AS"/>
</dbReference>
<dbReference type="InterPro" id="IPR001754">
    <property type="entry name" value="OMPdeCOase_dom"/>
</dbReference>
<dbReference type="InterPro" id="IPR011060">
    <property type="entry name" value="RibuloseP-bd_barrel"/>
</dbReference>
<dbReference type="NCBIfam" id="TIGR01740">
    <property type="entry name" value="pyrF"/>
    <property type="match status" value="1"/>
</dbReference>
<dbReference type="PANTHER" id="PTHR32119">
    <property type="entry name" value="OROTIDINE 5'-PHOSPHATE DECARBOXYLASE"/>
    <property type="match status" value="1"/>
</dbReference>
<dbReference type="PANTHER" id="PTHR32119:SF2">
    <property type="entry name" value="OROTIDINE 5'-PHOSPHATE DECARBOXYLASE"/>
    <property type="match status" value="1"/>
</dbReference>
<dbReference type="Pfam" id="PF00215">
    <property type="entry name" value="OMPdecase"/>
    <property type="match status" value="1"/>
</dbReference>
<dbReference type="SMART" id="SM00934">
    <property type="entry name" value="OMPdecase"/>
    <property type="match status" value="1"/>
</dbReference>
<dbReference type="SUPFAM" id="SSF51366">
    <property type="entry name" value="Ribulose-phoshate binding barrel"/>
    <property type="match status" value="1"/>
</dbReference>
<dbReference type="PROSITE" id="PS00156">
    <property type="entry name" value="OMPDECASE"/>
    <property type="match status" value="1"/>
</dbReference>
<comment type="catalytic activity">
    <reaction evidence="2">
        <text>orotidine 5'-phosphate + H(+) = UMP + CO2</text>
        <dbReference type="Rhea" id="RHEA:11596"/>
        <dbReference type="ChEBI" id="CHEBI:15378"/>
        <dbReference type="ChEBI" id="CHEBI:16526"/>
        <dbReference type="ChEBI" id="CHEBI:57538"/>
        <dbReference type="ChEBI" id="CHEBI:57865"/>
        <dbReference type="EC" id="4.1.1.23"/>
    </reaction>
</comment>
<comment type="pathway">
    <text>Pyrimidine metabolism; UMP biosynthesis via de novo pathway; UMP from orotate: step 2/2.</text>
</comment>
<comment type="similarity">
    <text evidence="3">Belongs to the OMP decarboxylase family.</text>
</comment>
<sequence length="284" mass="31448">MSTSTQITKPYSTRALTHQSQTARRLLKLMSDKRTNLCASLDVTTSAELLSLADKLGPYICMVKTHVDIISDFTYDETVVKLVALAKKHGFMIFEDRKFADIGNTVKNQYSKGVYRIVEWADITNAHSVPGEGIINGLREAANEYVESEKAKGGECENLDRGLIMLAELSSKGSLATGSYTTKTVELAHNNSDFVFGFIAQNRMEEVQDSEGNYEDWLILTPGVGLDDKGDGLGQQYRTVDTVIKNGSDVIIVGRGLFGKGRDPVVEGKRYRDAGWKAYEERIN</sequence>
<organism>
    <name type="scientific">Magnusiomyces magnusii</name>
    <name type="common">Yeast</name>
    <name type="synonym">Dipodascus magnusii</name>
    <dbReference type="NCBI Taxonomy" id="43963"/>
    <lineage>
        <taxon>Eukaryota</taxon>
        <taxon>Fungi</taxon>
        <taxon>Dikarya</taxon>
        <taxon>Ascomycota</taxon>
        <taxon>Saccharomycotina</taxon>
        <taxon>Dipodascomycetes</taxon>
        <taxon>Dipodascales</taxon>
        <taxon>Dipodascaceae</taxon>
        <taxon>Magnusiomyces</taxon>
    </lineage>
</organism>
<name>PYRF_MAGMU</name>
<keyword id="KW-0210">Decarboxylase</keyword>
<keyword id="KW-0456">Lyase</keyword>
<keyword id="KW-0665">Pyrimidine biosynthesis</keyword>
<evidence type="ECO:0000250" key="1"/>
<evidence type="ECO:0000255" key="2">
    <source>
        <dbReference type="PROSITE-ProRule" id="PRU10110"/>
    </source>
</evidence>
<evidence type="ECO:0000305" key="3"/>